<sequence length="97" mass="11237">MKKRGGRILWLVYLDSTIPKSRGRIIAKGVAVPKPTIQEVEEALRRLGYSYESYPEKKYPPLWFEERARGYFLVKSDEKPASIAAKVAEEIRRIRGQ</sequence>
<protein>
    <recommendedName>
        <fullName evidence="1">Signal recognition particle 19 kDa protein</fullName>
        <shortName evidence="1">SRP19</shortName>
    </recommendedName>
</protein>
<proteinExistence type="inferred from homology"/>
<comment type="function">
    <text evidence="1">Involved in targeting and insertion of nascent membrane proteins into the cytoplasmic membrane. Binds directly to 7S RNA and mediates binding of the 54 kDa subunit of the SRP.</text>
</comment>
<comment type="subunit">
    <text evidence="1">Part of the signal recognition particle protein translocation system, which is composed of SRP and FtsY. Archaeal SRP consists of a 7S RNA molecule of 300 nucleotides and two protein subunits: SRP54 and SRP19.</text>
</comment>
<comment type="subcellular location">
    <subcellularLocation>
        <location evidence="1">Cytoplasm</location>
    </subcellularLocation>
</comment>
<comment type="similarity">
    <text evidence="1">Belongs to the SRP19 family.</text>
</comment>
<evidence type="ECO:0000255" key="1">
    <source>
        <dbReference type="HAMAP-Rule" id="MF_00305"/>
    </source>
</evidence>
<accession>A3MWY1</accession>
<dbReference type="EMBL" id="CP000561">
    <property type="protein sequence ID" value="ABO09148.1"/>
    <property type="molecule type" value="Genomic_DNA"/>
</dbReference>
<dbReference type="RefSeq" id="WP_011850407.1">
    <property type="nucleotide sequence ID" value="NC_009073.1"/>
</dbReference>
<dbReference type="SMR" id="A3MWY1"/>
<dbReference type="STRING" id="410359.Pcal_1731"/>
<dbReference type="GeneID" id="4909518"/>
<dbReference type="KEGG" id="pcl:Pcal_1731"/>
<dbReference type="eggNOG" id="arCOG01217">
    <property type="taxonomic scope" value="Archaea"/>
</dbReference>
<dbReference type="HOGENOM" id="CLU_169299_1_0_2"/>
<dbReference type="OrthoDB" id="56356at2157"/>
<dbReference type="Proteomes" id="UP000001431">
    <property type="component" value="Chromosome"/>
</dbReference>
<dbReference type="GO" id="GO:0048500">
    <property type="term" value="C:signal recognition particle"/>
    <property type="evidence" value="ECO:0007669"/>
    <property type="project" value="UniProtKB-UniRule"/>
</dbReference>
<dbReference type="GO" id="GO:0008312">
    <property type="term" value="F:7S RNA binding"/>
    <property type="evidence" value="ECO:0007669"/>
    <property type="project" value="UniProtKB-UniRule"/>
</dbReference>
<dbReference type="GO" id="GO:0006614">
    <property type="term" value="P:SRP-dependent cotranslational protein targeting to membrane"/>
    <property type="evidence" value="ECO:0007669"/>
    <property type="project" value="InterPro"/>
</dbReference>
<dbReference type="Gene3D" id="3.30.56.30">
    <property type="entry name" value="Signal recognition particle, SRP19-like subunit"/>
    <property type="match status" value="1"/>
</dbReference>
<dbReference type="HAMAP" id="MF_00305">
    <property type="entry name" value="SRP19"/>
    <property type="match status" value="1"/>
</dbReference>
<dbReference type="InterPro" id="IPR002778">
    <property type="entry name" value="Signal_recog_particle_SRP19"/>
</dbReference>
<dbReference type="InterPro" id="IPR036521">
    <property type="entry name" value="SRP19-like_sf"/>
</dbReference>
<dbReference type="InterPro" id="IPR022938">
    <property type="entry name" value="SRP19_arc-type"/>
</dbReference>
<dbReference type="Pfam" id="PF01922">
    <property type="entry name" value="SRP19"/>
    <property type="match status" value="1"/>
</dbReference>
<dbReference type="SUPFAM" id="SSF69695">
    <property type="entry name" value="SRP19"/>
    <property type="match status" value="1"/>
</dbReference>
<name>SRP19_PYRCJ</name>
<keyword id="KW-0963">Cytoplasm</keyword>
<keyword id="KW-0687">Ribonucleoprotein</keyword>
<keyword id="KW-0694">RNA-binding</keyword>
<keyword id="KW-0733">Signal recognition particle</keyword>
<organism>
    <name type="scientific">Pyrobaculum calidifontis (strain DSM 21063 / JCM 11548 / VA1)</name>
    <dbReference type="NCBI Taxonomy" id="410359"/>
    <lineage>
        <taxon>Archaea</taxon>
        <taxon>Thermoproteota</taxon>
        <taxon>Thermoprotei</taxon>
        <taxon>Thermoproteales</taxon>
        <taxon>Thermoproteaceae</taxon>
        <taxon>Pyrobaculum</taxon>
    </lineage>
</organism>
<reference key="1">
    <citation type="submission" date="2007-02" db="EMBL/GenBank/DDBJ databases">
        <title>Complete sequence of Pyrobaculum calidifontis JCM 11548.</title>
        <authorList>
            <consortium name="US DOE Joint Genome Institute"/>
            <person name="Copeland A."/>
            <person name="Lucas S."/>
            <person name="Lapidus A."/>
            <person name="Barry K."/>
            <person name="Glavina del Rio T."/>
            <person name="Dalin E."/>
            <person name="Tice H."/>
            <person name="Pitluck S."/>
            <person name="Chain P."/>
            <person name="Malfatti S."/>
            <person name="Shin M."/>
            <person name="Vergez L."/>
            <person name="Schmutz J."/>
            <person name="Larimer F."/>
            <person name="Land M."/>
            <person name="Hauser L."/>
            <person name="Kyrpides N."/>
            <person name="Mikhailova N."/>
            <person name="Cozen A.E."/>
            <person name="Fitz-Gibbon S.T."/>
            <person name="House C.H."/>
            <person name="Saltikov C."/>
            <person name="Lowe T.M."/>
            <person name="Richardson P."/>
        </authorList>
    </citation>
    <scope>NUCLEOTIDE SEQUENCE [LARGE SCALE GENOMIC DNA]</scope>
    <source>
        <strain>DSM 21063 / JCM 11548 / VA1</strain>
    </source>
</reference>
<feature type="chain" id="PRO_0000300751" description="Signal recognition particle 19 kDa protein">
    <location>
        <begin position="1"/>
        <end position="97"/>
    </location>
</feature>
<gene>
    <name evidence="1" type="primary">srp19</name>
    <name type="ordered locus">Pcal_1731</name>
</gene>